<gene>
    <name evidence="1" type="primary">recA</name>
    <name type="ordered locus">ECS88_2962</name>
</gene>
<feature type="chain" id="PRO_1000193310" description="Protein RecA">
    <location>
        <begin position="1"/>
        <end position="353"/>
    </location>
</feature>
<feature type="region of interest" description="Disordered" evidence="2">
    <location>
        <begin position="330"/>
        <end position="353"/>
    </location>
</feature>
<feature type="compositionally biased region" description="Acidic residues" evidence="2">
    <location>
        <begin position="339"/>
        <end position="353"/>
    </location>
</feature>
<feature type="binding site" evidence="1">
    <location>
        <begin position="67"/>
        <end position="74"/>
    </location>
    <ligand>
        <name>ATP</name>
        <dbReference type="ChEBI" id="CHEBI:30616"/>
    </ligand>
</feature>
<proteinExistence type="inferred from homology"/>
<comment type="function">
    <text evidence="1">Can catalyze the hydrolysis of ATP in the presence of single-stranded DNA, the ATP-dependent uptake of single-stranded DNA by duplex DNA, and the ATP-dependent hybridization of homologous single-stranded DNAs. It interacts with LexA causing its activation and leading to its autocatalytic cleavage.</text>
</comment>
<comment type="subcellular location">
    <subcellularLocation>
        <location evidence="1">Cytoplasm</location>
    </subcellularLocation>
</comment>
<comment type="similarity">
    <text evidence="1">Belongs to the RecA family.</text>
</comment>
<reference key="1">
    <citation type="journal article" date="2009" name="PLoS Genet.">
        <title>Organised genome dynamics in the Escherichia coli species results in highly diverse adaptive paths.</title>
        <authorList>
            <person name="Touchon M."/>
            <person name="Hoede C."/>
            <person name="Tenaillon O."/>
            <person name="Barbe V."/>
            <person name="Baeriswyl S."/>
            <person name="Bidet P."/>
            <person name="Bingen E."/>
            <person name="Bonacorsi S."/>
            <person name="Bouchier C."/>
            <person name="Bouvet O."/>
            <person name="Calteau A."/>
            <person name="Chiapello H."/>
            <person name="Clermont O."/>
            <person name="Cruveiller S."/>
            <person name="Danchin A."/>
            <person name="Diard M."/>
            <person name="Dossat C."/>
            <person name="Karoui M.E."/>
            <person name="Frapy E."/>
            <person name="Garry L."/>
            <person name="Ghigo J.M."/>
            <person name="Gilles A.M."/>
            <person name="Johnson J."/>
            <person name="Le Bouguenec C."/>
            <person name="Lescat M."/>
            <person name="Mangenot S."/>
            <person name="Martinez-Jehanne V."/>
            <person name="Matic I."/>
            <person name="Nassif X."/>
            <person name="Oztas S."/>
            <person name="Petit M.A."/>
            <person name="Pichon C."/>
            <person name="Rouy Z."/>
            <person name="Ruf C.S."/>
            <person name="Schneider D."/>
            <person name="Tourret J."/>
            <person name="Vacherie B."/>
            <person name="Vallenet D."/>
            <person name="Medigue C."/>
            <person name="Rocha E.P.C."/>
            <person name="Denamur E."/>
        </authorList>
    </citation>
    <scope>NUCLEOTIDE SEQUENCE [LARGE SCALE GENOMIC DNA]</scope>
    <source>
        <strain>S88 / ExPEC</strain>
    </source>
</reference>
<accession>B7MKG8</accession>
<dbReference type="EMBL" id="CU928161">
    <property type="protein sequence ID" value="CAR04208.1"/>
    <property type="molecule type" value="Genomic_DNA"/>
</dbReference>
<dbReference type="RefSeq" id="WP_000963143.1">
    <property type="nucleotide sequence ID" value="NC_011742.1"/>
</dbReference>
<dbReference type="SMR" id="B7MKG8"/>
<dbReference type="GeneID" id="93779312"/>
<dbReference type="KEGG" id="ecz:ECS88_2962"/>
<dbReference type="HOGENOM" id="CLU_040469_3_2_6"/>
<dbReference type="Proteomes" id="UP000000747">
    <property type="component" value="Chromosome"/>
</dbReference>
<dbReference type="GO" id="GO:0005829">
    <property type="term" value="C:cytosol"/>
    <property type="evidence" value="ECO:0007669"/>
    <property type="project" value="TreeGrafter"/>
</dbReference>
<dbReference type="GO" id="GO:0005524">
    <property type="term" value="F:ATP binding"/>
    <property type="evidence" value="ECO:0007669"/>
    <property type="project" value="UniProtKB-UniRule"/>
</dbReference>
<dbReference type="GO" id="GO:0016887">
    <property type="term" value="F:ATP hydrolysis activity"/>
    <property type="evidence" value="ECO:0007669"/>
    <property type="project" value="InterPro"/>
</dbReference>
<dbReference type="GO" id="GO:0140664">
    <property type="term" value="F:ATP-dependent DNA damage sensor activity"/>
    <property type="evidence" value="ECO:0007669"/>
    <property type="project" value="InterPro"/>
</dbReference>
<dbReference type="GO" id="GO:0003684">
    <property type="term" value="F:damaged DNA binding"/>
    <property type="evidence" value="ECO:0007669"/>
    <property type="project" value="UniProtKB-UniRule"/>
</dbReference>
<dbReference type="GO" id="GO:0003697">
    <property type="term" value="F:single-stranded DNA binding"/>
    <property type="evidence" value="ECO:0007669"/>
    <property type="project" value="UniProtKB-UniRule"/>
</dbReference>
<dbReference type="GO" id="GO:0006310">
    <property type="term" value="P:DNA recombination"/>
    <property type="evidence" value="ECO:0007669"/>
    <property type="project" value="UniProtKB-UniRule"/>
</dbReference>
<dbReference type="GO" id="GO:0006281">
    <property type="term" value="P:DNA repair"/>
    <property type="evidence" value="ECO:0007669"/>
    <property type="project" value="UniProtKB-UniRule"/>
</dbReference>
<dbReference type="GO" id="GO:0009432">
    <property type="term" value="P:SOS response"/>
    <property type="evidence" value="ECO:0007669"/>
    <property type="project" value="UniProtKB-UniRule"/>
</dbReference>
<dbReference type="CDD" id="cd00983">
    <property type="entry name" value="RecA"/>
    <property type="match status" value="1"/>
</dbReference>
<dbReference type="FunFam" id="3.40.50.300:FF:000087">
    <property type="entry name" value="Recombinase RecA"/>
    <property type="match status" value="1"/>
</dbReference>
<dbReference type="Gene3D" id="3.40.50.300">
    <property type="entry name" value="P-loop containing nucleotide triphosphate hydrolases"/>
    <property type="match status" value="1"/>
</dbReference>
<dbReference type="HAMAP" id="MF_00268">
    <property type="entry name" value="RecA"/>
    <property type="match status" value="1"/>
</dbReference>
<dbReference type="InterPro" id="IPR003593">
    <property type="entry name" value="AAA+_ATPase"/>
</dbReference>
<dbReference type="InterPro" id="IPR013765">
    <property type="entry name" value="DNA_recomb/repair_RecA"/>
</dbReference>
<dbReference type="InterPro" id="IPR020584">
    <property type="entry name" value="DNA_recomb/repair_RecA_CS"/>
</dbReference>
<dbReference type="InterPro" id="IPR027417">
    <property type="entry name" value="P-loop_NTPase"/>
</dbReference>
<dbReference type="InterPro" id="IPR049261">
    <property type="entry name" value="RecA-like_C"/>
</dbReference>
<dbReference type="InterPro" id="IPR049428">
    <property type="entry name" value="RecA-like_N"/>
</dbReference>
<dbReference type="InterPro" id="IPR020588">
    <property type="entry name" value="RecA_ATP-bd"/>
</dbReference>
<dbReference type="InterPro" id="IPR023400">
    <property type="entry name" value="RecA_C_sf"/>
</dbReference>
<dbReference type="InterPro" id="IPR020587">
    <property type="entry name" value="RecA_monomer-monomer_interface"/>
</dbReference>
<dbReference type="NCBIfam" id="TIGR02012">
    <property type="entry name" value="tigrfam_recA"/>
    <property type="match status" value="1"/>
</dbReference>
<dbReference type="PANTHER" id="PTHR45900:SF1">
    <property type="entry name" value="MITOCHONDRIAL DNA REPAIR PROTEIN RECA HOMOLOG-RELATED"/>
    <property type="match status" value="1"/>
</dbReference>
<dbReference type="PANTHER" id="PTHR45900">
    <property type="entry name" value="RECA"/>
    <property type="match status" value="1"/>
</dbReference>
<dbReference type="Pfam" id="PF00154">
    <property type="entry name" value="RecA"/>
    <property type="match status" value="1"/>
</dbReference>
<dbReference type="Pfam" id="PF21096">
    <property type="entry name" value="RecA_C"/>
    <property type="match status" value="1"/>
</dbReference>
<dbReference type="PRINTS" id="PR00142">
    <property type="entry name" value="RECA"/>
</dbReference>
<dbReference type="SMART" id="SM00382">
    <property type="entry name" value="AAA"/>
    <property type="match status" value="1"/>
</dbReference>
<dbReference type="SUPFAM" id="SSF52540">
    <property type="entry name" value="P-loop containing nucleoside triphosphate hydrolases"/>
    <property type="match status" value="1"/>
</dbReference>
<dbReference type="SUPFAM" id="SSF54752">
    <property type="entry name" value="RecA protein, C-terminal domain"/>
    <property type="match status" value="1"/>
</dbReference>
<dbReference type="PROSITE" id="PS00321">
    <property type="entry name" value="RECA_1"/>
    <property type="match status" value="1"/>
</dbReference>
<dbReference type="PROSITE" id="PS50162">
    <property type="entry name" value="RECA_2"/>
    <property type="match status" value="1"/>
</dbReference>
<dbReference type="PROSITE" id="PS50163">
    <property type="entry name" value="RECA_3"/>
    <property type="match status" value="1"/>
</dbReference>
<sequence length="353" mass="37973">MAIDENKQKALAAALGQIEKQFGKGSIMRLGEDRSMDVETISTGSLSLDIALGAGGLPMGRIVEIYGPESSGKTTLTLQVIAAAQREGKTCAFIDAEHALDPIYARKLGVDIDNLLCSQPDTGEQALEICDALARSGAVDVIVVDSVAALTPKAEIEGEIGDSHMGLAARMMSQAMRKLAGNLKQSNTLLIFINQIRMKIGVMFGNPETTTGGNALKFYASVRLDIRRIGAVKEGENVVGSETRVKVVKNKIAAPFKQAEFQILYGEGINFYGELVDLGVKEKLIEKAGAWYSYKGEKIGQGKANATAWLKDNPETAKEIEKKVRELLLSNPNSTPDFSVDDSEGVAETNEDF</sequence>
<keyword id="KW-0067">ATP-binding</keyword>
<keyword id="KW-0963">Cytoplasm</keyword>
<keyword id="KW-0227">DNA damage</keyword>
<keyword id="KW-0233">DNA recombination</keyword>
<keyword id="KW-0234">DNA repair</keyword>
<keyword id="KW-0238">DNA-binding</keyword>
<keyword id="KW-0547">Nucleotide-binding</keyword>
<keyword id="KW-1185">Reference proteome</keyword>
<keyword id="KW-0742">SOS response</keyword>
<protein>
    <recommendedName>
        <fullName evidence="1">Protein RecA</fullName>
    </recommendedName>
    <alternativeName>
        <fullName evidence="1">Recombinase A</fullName>
    </alternativeName>
</protein>
<name>RECA_ECO45</name>
<organism>
    <name type="scientific">Escherichia coli O45:K1 (strain S88 / ExPEC)</name>
    <dbReference type="NCBI Taxonomy" id="585035"/>
    <lineage>
        <taxon>Bacteria</taxon>
        <taxon>Pseudomonadati</taxon>
        <taxon>Pseudomonadota</taxon>
        <taxon>Gammaproteobacteria</taxon>
        <taxon>Enterobacterales</taxon>
        <taxon>Enterobacteriaceae</taxon>
        <taxon>Escherichia</taxon>
    </lineage>
</organism>
<evidence type="ECO:0000255" key="1">
    <source>
        <dbReference type="HAMAP-Rule" id="MF_00268"/>
    </source>
</evidence>
<evidence type="ECO:0000256" key="2">
    <source>
        <dbReference type="SAM" id="MobiDB-lite"/>
    </source>
</evidence>